<gene>
    <name evidence="9" type="primary">Mpp2</name>
    <name type="ORF">rCG_34691</name>
</gene>
<protein>
    <recommendedName>
        <fullName>MAGUK p55 subfamily member 2</fullName>
    </recommendedName>
    <alternativeName>
        <fullName>Protein MPP2</fullName>
    </alternativeName>
</protein>
<organism>
    <name type="scientific">Rattus norvegicus</name>
    <name type="common">Rat</name>
    <dbReference type="NCBI Taxonomy" id="10116"/>
    <lineage>
        <taxon>Eukaryota</taxon>
        <taxon>Metazoa</taxon>
        <taxon>Chordata</taxon>
        <taxon>Craniata</taxon>
        <taxon>Vertebrata</taxon>
        <taxon>Euteleostomi</taxon>
        <taxon>Mammalia</taxon>
        <taxon>Eutheria</taxon>
        <taxon>Euarchontoglires</taxon>
        <taxon>Glires</taxon>
        <taxon>Rodentia</taxon>
        <taxon>Myomorpha</taxon>
        <taxon>Muroidea</taxon>
        <taxon>Muridae</taxon>
        <taxon>Murinae</taxon>
        <taxon>Rattus</taxon>
    </lineage>
</organism>
<accession>D3ZAA9</accession>
<accession>G3V8T8</accession>
<proteinExistence type="evidence at protein level"/>
<feature type="chain" id="PRO_0000439282" description="MAGUK p55 subfamily member 2">
    <location>
        <begin position="1"/>
        <end position="552"/>
    </location>
</feature>
<feature type="domain" description="L27 1" evidence="6">
    <location>
        <begin position="8"/>
        <end position="59"/>
    </location>
</feature>
<feature type="domain" description="L27 2" evidence="6">
    <location>
        <begin position="60"/>
        <end position="118"/>
    </location>
</feature>
<feature type="domain" description="PDZ" evidence="4">
    <location>
        <begin position="140"/>
        <end position="219"/>
    </location>
</feature>
<feature type="domain" description="SH3" evidence="5">
    <location>
        <begin position="225"/>
        <end position="293"/>
    </location>
</feature>
<feature type="domain" description="Guanylate kinase-like" evidence="3">
    <location>
        <begin position="350"/>
        <end position="537"/>
    </location>
</feature>
<feature type="modified residue" description="Phosphoserine" evidence="10">
    <location>
        <position position="42"/>
    </location>
</feature>
<feature type="modified residue" description="Phosphothreonine" evidence="10">
    <location>
        <position position="117"/>
    </location>
</feature>
<feature type="modified residue" description="Phosphoserine" evidence="10">
    <location>
        <position position="121"/>
    </location>
</feature>
<evidence type="ECO:0000250" key="1">
    <source>
        <dbReference type="UniProtKB" id="Q14168"/>
    </source>
</evidence>
<evidence type="ECO:0000250" key="2">
    <source>
        <dbReference type="UniProtKB" id="Q9WV34"/>
    </source>
</evidence>
<evidence type="ECO:0000255" key="3">
    <source>
        <dbReference type="PROSITE-ProRule" id="PRU00100"/>
    </source>
</evidence>
<evidence type="ECO:0000255" key="4">
    <source>
        <dbReference type="PROSITE-ProRule" id="PRU00143"/>
    </source>
</evidence>
<evidence type="ECO:0000255" key="5">
    <source>
        <dbReference type="PROSITE-ProRule" id="PRU00192"/>
    </source>
</evidence>
<evidence type="ECO:0000255" key="6">
    <source>
        <dbReference type="PROSITE-ProRule" id="PRU00365"/>
    </source>
</evidence>
<evidence type="ECO:0000269" key="7">
    <source>
    </source>
</evidence>
<evidence type="ECO:0000305" key="8"/>
<evidence type="ECO:0000312" key="9">
    <source>
        <dbReference type="RGD" id="620014"/>
    </source>
</evidence>
<evidence type="ECO:0007744" key="10">
    <source>
    </source>
</evidence>
<dbReference type="EMBL" id="AC098160">
    <property type="status" value="NOT_ANNOTATED_CDS"/>
    <property type="molecule type" value="Genomic_DNA"/>
</dbReference>
<dbReference type="EMBL" id="CH473948">
    <property type="protein sequence ID" value="EDM06167.1"/>
    <property type="molecule type" value="Genomic_DNA"/>
</dbReference>
<dbReference type="EMBL" id="CH473948">
    <property type="protein sequence ID" value="EDM06168.1"/>
    <property type="molecule type" value="Genomic_DNA"/>
</dbReference>
<dbReference type="RefSeq" id="NP_001401143.1">
    <property type="nucleotide sequence ID" value="NM_001414214.1"/>
</dbReference>
<dbReference type="RefSeq" id="NP_001401151.1">
    <property type="nucleotide sequence ID" value="NM_001414222.1"/>
</dbReference>
<dbReference type="RefSeq" id="NP_445965.1">
    <property type="nucleotide sequence ID" value="NM_053513.2"/>
</dbReference>
<dbReference type="RefSeq" id="XP_008766351.1">
    <property type="nucleotide sequence ID" value="XM_008768129.2"/>
</dbReference>
<dbReference type="RefSeq" id="XP_063126071.1">
    <property type="nucleotide sequence ID" value="XM_063270001.1"/>
</dbReference>
<dbReference type="RefSeq" id="XP_063126072.1">
    <property type="nucleotide sequence ID" value="XM_063270002.1"/>
</dbReference>
<dbReference type="SMR" id="D3ZAA9"/>
<dbReference type="FunCoup" id="D3ZAA9">
    <property type="interactions" value="1814"/>
</dbReference>
<dbReference type="IntAct" id="D3ZAA9">
    <property type="interactions" value="2"/>
</dbReference>
<dbReference type="STRING" id="10116.ENSRNOP00000073193"/>
<dbReference type="iPTMnet" id="D3ZAA9"/>
<dbReference type="PhosphoSitePlus" id="D3ZAA9"/>
<dbReference type="jPOST" id="D3ZAA9"/>
<dbReference type="PaxDb" id="10116-ENSRNOP00000052061"/>
<dbReference type="PeptideAtlas" id="D3ZAA9"/>
<dbReference type="Ensembl" id="ENSRNOT00000092150.2">
    <property type="protein sequence ID" value="ENSRNOP00000072422.1"/>
    <property type="gene ID" value="ENSRNOG00000059683.2"/>
</dbReference>
<dbReference type="GeneID" id="85275"/>
<dbReference type="KEGG" id="rno:85275"/>
<dbReference type="AGR" id="RGD:620014"/>
<dbReference type="CTD" id="4355"/>
<dbReference type="RGD" id="620014">
    <property type="gene designation" value="Mpp2"/>
</dbReference>
<dbReference type="eggNOG" id="KOG0609">
    <property type="taxonomic scope" value="Eukaryota"/>
</dbReference>
<dbReference type="GeneTree" id="ENSGT00940000155348"/>
<dbReference type="HOGENOM" id="CLU_001715_5_1_1"/>
<dbReference type="InParanoid" id="D3ZAA9"/>
<dbReference type="TreeFam" id="TF314263"/>
<dbReference type="PRO" id="PR:D3ZAA9"/>
<dbReference type="Proteomes" id="UP000002494">
    <property type="component" value="Chromosome 10"/>
</dbReference>
<dbReference type="Proteomes" id="UP000234681">
    <property type="component" value="Chromosome 10"/>
</dbReference>
<dbReference type="Bgee" id="ENSRNOG00000059683">
    <property type="expression patterns" value="Expressed in frontal cortex and 15 other cell types or tissues"/>
</dbReference>
<dbReference type="GO" id="GO:0005911">
    <property type="term" value="C:cell-cell junction"/>
    <property type="evidence" value="ECO:0000318"/>
    <property type="project" value="GO_Central"/>
</dbReference>
<dbReference type="GO" id="GO:0005737">
    <property type="term" value="C:cytoplasm"/>
    <property type="evidence" value="ECO:0007669"/>
    <property type="project" value="UniProtKB-KW"/>
</dbReference>
<dbReference type="GO" id="GO:0005856">
    <property type="term" value="C:cytoskeleton"/>
    <property type="evidence" value="ECO:0000250"/>
    <property type="project" value="UniProtKB"/>
</dbReference>
<dbReference type="GO" id="GO:0032590">
    <property type="term" value="C:dendrite membrane"/>
    <property type="evidence" value="ECO:0000266"/>
    <property type="project" value="RGD"/>
</dbReference>
<dbReference type="GO" id="GO:0043198">
    <property type="term" value="C:dendritic shaft"/>
    <property type="evidence" value="ECO:0000266"/>
    <property type="project" value="RGD"/>
</dbReference>
<dbReference type="GO" id="GO:0043197">
    <property type="term" value="C:dendritic spine"/>
    <property type="evidence" value="ECO:0000266"/>
    <property type="project" value="RGD"/>
</dbReference>
<dbReference type="GO" id="GO:0098978">
    <property type="term" value="C:glutamatergic synapse"/>
    <property type="evidence" value="ECO:0000314"/>
    <property type="project" value="SynGO"/>
</dbReference>
<dbReference type="GO" id="GO:0005886">
    <property type="term" value="C:plasma membrane"/>
    <property type="evidence" value="ECO:0000318"/>
    <property type="project" value="GO_Central"/>
</dbReference>
<dbReference type="GO" id="GO:0014069">
    <property type="term" value="C:postsynaptic density"/>
    <property type="evidence" value="ECO:0000314"/>
    <property type="project" value="UniProtKB"/>
</dbReference>
<dbReference type="GO" id="GO:0098839">
    <property type="term" value="C:postsynaptic density membrane"/>
    <property type="evidence" value="ECO:0000266"/>
    <property type="project" value="RGD"/>
</dbReference>
<dbReference type="GO" id="GO:0098685">
    <property type="term" value="C:Schaffer collateral - CA1 synapse"/>
    <property type="evidence" value="ECO:0000266"/>
    <property type="project" value="RGD"/>
</dbReference>
<dbReference type="GO" id="GO:0030165">
    <property type="term" value="F:PDZ domain binding"/>
    <property type="evidence" value="ECO:0000353"/>
    <property type="project" value="RGD"/>
</dbReference>
<dbReference type="GO" id="GO:0098919">
    <property type="term" value="F:structural constituent of postsynaptic density"/>
    <property type="evidence" value="ECO:0000314"/>
    <property type="project" value="SynGO"/>
</dbReference>
<dbReference type="GO" id="GO:0044325">
    <property type="term" value="F:transmembrane transporter binding"/>
    <property type="evidence" value="ECO:0000266"/>
    <property type="project" value="RGD"/>
</dbReference>
<dbReference type="GO" id="GO:0060079">
    <property type="term" value="P:excitatory postsynaptic potential"/>
    <property type="evidence" value="ECO:0000266"/>
    <property type="project" value="RGD"/>
</dbReference>
<dbReference type="GO" id="GO:0060291">
    <property type="term" value="P:long-term synaptic potentiation"/>
    <property type="evidence" value="ECO:0000266"/>
    <property type="project" value="RGD"/>
</dbReference>
<dbReference type="GO" id="GO:0051260">
    <property type="term" value="P:protein homooligomerization"/>
    <property type="evidence" value="ECO:0000353"/>
    <property type="project" value="UniProtKB"/>
</dbReference>
<dbReference type="CDD" id="cd00071">
    <property type="entry name" value="GMPK"/>
    <property type="match status" value="1"/>
</dbReference>
<dbReference type="CDD" id="cd10832">
    <property type="entry name" value="PDZ_MPP6-MPP2-like"/>
    <property type="match status" value="1"/>
</dbReference>
<dbReference type="CDD" id="cd12037">
    <property type="entry name" value="SH3_MPP2"/>
    <property type="match status" value="1"/>
</dbReference>
<dbReference type="FunFam" id="3.30.63.10:FF:000002">
    <property type="entry name" value="Guanylate kinase 1"/>
    <property type="match status" value="1"/>
</dbReference>
<dbReference type="FunFam" id="2.30.30.40:FF:000069">
    <property type="entry name" value="MAGUK p55 subfamily member 6"/>
    <property type="match status" value="1"/>
</dbReference>
<dbReference type="FunFam" id="2.30.42.10:FF:000047">
    <property type="entry name" value="MAGUK p55 subfamily member 6"/>
    <property type="match status" value="1"/>
</dbReference>
<dbReference type="FunFam" id="3.40.50.300:FF:000146">
    <property type="entry name" value="MAGUK p55 subfamily member 6 isoform X1"/>
    <property type="match status" value="1"/>
</dbReference>
<dbReference type="Gene3D" id="2.30.42.10">
    <property type="match status" value="1"/>
</dbReference>
<dbReference type="Gene3D" id="1.10.287.650">
    <property type="entry name" value="L27 domain"/>
    <property type="match status" value="1"/>
</dbReference>
<dbReference type="Gene3D" id="3.40.50.300">
    <property type="entry name" value="P-loop containing nucleotide triphosphate hydrolases"/>
    <property type="match status" value="1"/>
</dbReference>
<dbReference type="Gene3D" id="2.30.30.40">
    <property type="entry name" value="SH3 Domains"/>
    <property type="match status" value="1"/>
</dbReference>
<dbReference type="InterPro" id="IPR008145">
    <property type="entry name" value="GK/Ca_channel_bsu"/>
</dbReference>
<dbReference type="InterPro" id="IPR008144">
    <property type="entry name" value="Guanylate_kin-like_dom"/>
</dbReference>
<dbReference type="InterPro" id="IPR020590">
    <property type="entry name" value="Guanylate_kinase_CS"/>
</dbReference>
<dbReference type="InterPro" id="IPR014775">
    <property type="entry name" value="L27_C"/>
</dbReference>
<dbReference type="InterPro" id="IPR004172">
    <property type="entry name" value="L27_dom"/>
</dbReference>
<dbReference type="InterPro" id="IPR036892">
    <property type="entry name" value="L27_dom_sf"/>
</dbReference>
<dbReference type="InterPro" id="IPR050716">
    <property type="entry name" value="MAGUK"/>
</dbReference>
<dbReference type="InterPro" id="IPR035602">
    <property type="entry name" value="MPP2_SH3"/>
</dbReference>
<dbReference type="InterPro" id="IPR027417">
    <property type="entry name" value="P-loop_NTPase"/>
</dbReference>
<dbReference type="InterPro" id="IPR001478">
    <property type="entry name" value="PDZ"/>
</dbReference>
<dbReference type="InterPro" id="IPR036034">
    <property type="entry name" value="PDZ_sf"/>
</dbReference>
<dbReference type="InterPro" id="IPR036028">
    <property type="entry name" value="SH3-like_dom_sf"/>
</dbReference>
<dbReference type="InterPro" id="IPR001452">
    <property type="entry name" value="SH3_domain"/>
</dbReference>
<dbReference type="PANTHER" id="PTHR23122">
    <property type="entry name" value="MEMBRANE-ASSOCIATED GUANYLATE KINASE MAGUK"/>
    <property type="match status" value="1"/>
</dbReference>
<dbReference type="Pfam" id="PF00625">
    <property type="entry name" value="Guanylate_kin"/>
    <property type="match status" value="1"/>
</dbReference>
<dbReference type="Pfam" id="PF02828">
    <property type="entry name" value="L27"/>
    <property type="match status" value="2"/>
</dbReference>
<dbReference type="Pfam" id="PF00595">
    <property type="entry name" value="PDZ"/>
    <property type="match status" value="1"/>
</dbReference>
<dbReference type="Pfam" id="PF07653">
    <property type="entry name" value="SH3_2"/>
    <property type="match status" value="1"/>
</dbReference>
<dbReference type="SMART" id="SM00072">
    <property type="entry name" value="GuKc"/>
    <property type="match status" value="1"/>
</dbReference>
<dbReference type="SMART" id="SM00569">
    <property type="entry name" value="L27"/>
    <property type="match status" value="2"/>
</dbReference>
<dbReference type="SMART" id="SM00228">
    <property type="entry name" value="PDZ"/>
    <property type="match status" value="1"/>
</dbReference>
<dbReference type="SMART" id="SM00326">
    <property type="entry name" value="SH3"/>
    <property type="match status" value="1"/>
</dbReference>
<dbReference type="SUPFAM" id="SSF101288">
    <property type="entry name" value="L27 domain"/>
    <property type="match status" value="1"/>
</dbReference>
<dbReference type="SUPFAM" id="SSF52540">
    <property type="entry name" value="P-loop containing nucleoside triphosphate hydrolases"/>
    <property type="match status" value="1"/>
</dbReference>
<dbReference type="SUPFAM" id="SSF50156">
    <property type="entry name" value="PDZ domain-like"/>
    <property type="match status" value="1"/>
</dbReference>
<dbReference type="SUPFAM" id="SSF50044">
    <property type="entry name" value="SH3-domain"/>
    <property type="match status" value="1"/>
</dbReference>
<dbReference type="PROSITE" id="PS00856">
    <property type="entry name" value="GUANYLATE_KINASE_1"/>
    <property type="match status" value="1"/>
</dbReference>
<dbReference type="PROSITE" id="PS50052">
    <property type="entry name" value="GUANYLATE_KINASE_2"/>
    <property type="match status" value="1"/>
</dbReference>
<dbReference type="PROSITE" id="PS51022">
    <property type="entry name" value="L27"/>
    <property type="match status" value="2"/>
</dbReference>
<dbReference type="PROSITE" id="PS50106">
    <property type="entry name" value="PDZ"/>
    <property type="match status" value="1"/>
</dbReference>
<dbReference type="PROSITE" id="PS50002">
    <property type="entry name" value="SH3"/>
    <property type="match status" value="1"/>
</dbReference>
<reference key="1">
    <citation type="journal article" date="2004" name="Nature">
        <title>Genome sequence of the Brown Norway rat yields insights into mammalian evolution.</title>
        <authorList>
            <person name="Gibbs R.A."/>
            <person name="Weinstock G.M."/>
            <person name="Metzker M.L."/>
            <person name="Muzny D.M."/>
            <person name="Sodergren E.J."/>
            <person name="Scherer S."/>
            <person name="Scott G."/>
            <person name="Steffen D."/>
            <person name="Worley K.C."/>
            <person name="Burch P.E."/>
            <person name="Okwuonu G."/>
            <person name="Hines S."/>
            <person name="Lewis L."/>
            <person name="Deramo C."/>
            <person name="Delgado O."/>
            <person name="Dugan-Rocha S."/>
            <person name="Miner G."/>
            <person name="Morgan M."/>
            <person name="Hawes A."/>
            <person name="Gill R."/>
            <person name="Holt R.A."/>
            <person name="Adams M.D."/>
            <person name="Amanatides P.G."/>
            <person name="Baden-Tillson H."/>
            <person name="Barnstead M."/>
            <person name="Chin S."/>
            <person name="Evans C.A."/>
            <person name="Ferriera S."/>
            <person name="Fosler C."/>
            <person name="Glodek A."/>
            <person name="Gu Z."/>
            <person name="Jennings D."/>
            <person name="Kraft C.L."/>
            <person name="Nguyen T."/>
            <person name="Pfannkoch C.M."/>
            <person name="Sitter C."/>
            <person name="Sutton G.G."/>
            <person name="Venter J.C."/>
            <person name="Woodage T."/>
            <person name="Smith D."/>
            <person name="Lee H.-M."/>
            <person name="Gustafson E."/>
            <person name="Cahill P."/>
            <person name="Kana A."/>
            <person name="Doucette-Stamm L."/>
            <person name="Weinstock K."/>
            <person name="Fechtel K."/>
            <person name="Weiss R.B."/>
            <person name="Dunn D.M."/>
            <person name="Green E.D."/>
            <person name="Blakesley R.W."/>
            <person name="Bouffard G.G."/>
            <person name="De Jong P.J."/>
            <person name="Osoegawa K."/>
            <person name="Zhu B."/>
            <person name="Marra M."/>
            <person name="Schein J."/>
            <person name="Bosdet I."/>
            <person name="Fjell C."/>
            <person name="Jones S."/>
            <person name="Krzywinski M."/>
            <person name="Mathewson C."/>
            <person name="Siddiqui A."/>
            <person name="Wye N."/>
            <person name="McPherson J."/>
            <person name="Zhao S."/>
            <person name="Fraser C.M."/>
            <person name="Shetty J."/>
            <person name="Shatsman S."/>
            <person name="Geer K."/>
            <person name="Chen Y."/>
            <person name="Abramzon S."/>
            <person name="Nierman W.C."/>
            <person name="Havlak P.H."/>
            <person name="Chen R."/>
            <person name="Durbin K.J."/>
            <person name="Egan A."/>
            <person name="Ren Y."/>
            <person name="Song X.-Z."/>
            <person name="Li B."/>
            <person name="Liu Y."/>
            <person name="Qin X."/>
            <person name="Cawley S."/>
            <person name="Cooney A.J."/>
            <person name="D'Souza L.M."/>
            <person name="Martin K."/>
            <person name="Wu J.Q."/>
            <person name="Gonzalez-Garay M.L."/>
            <person name="Jackson A.R."/>
            <person name="Kalafus K.J."/>
            <person name="McLeod M.P."/>
            <person name="Milosavljevic A."/>
            <person name="Virk D."/>
            <person name="Volkov A."/>
            <person name="Wheeler D.A."/>
            <person name="Zhang Z."/>
            <person name="Bailey J.A."/>
            <person name="Eichler E.E."/>
            <person name="Tuzun E."/>
            <person name="Birney E."/>
            <person name="Mongin E."/>
            <person name="Ureta-Vidal A."/>
            <person name="Woodwark C."/>
            <person name="Zdobnov E."/>
            <person name="Bork P."/>
            <person name="Suyama M."/>
            <person name="Torrents D."/>
            <person name="Alexandersson M."/>
            <person name="Trask B.J."/>
            <person name="Young J.M."/>
            <person name="Huang H."/>
            <person name="Wang H."/>
            <person name="Xing H."/>
            <person name="Daniels S."/>
            <person name="Gietzen D."/>
            <person name="Schmidt J."/>
            <person name="Stevens K."/>
            <person name="Vitt U."/>
            <person name="Wingrove J."/>
            <person name="Camara F."/>
            <person name="Mar Alba M."/>
            <person name="Abril J.F."/>
            <person name="Guigo R."/>
            <person name="Smit A."/>
            <person name="Dubchak I."/>
            <person name="Rubin E.M."/>
            <person name="Couronne O."/>
            <person name="Poliakov A."/>
            <person name="Huebner N."/>
            <person name="Ganten D."/>
            <person name="Goesele C."/>
            <person name="Hummel O."/>
            <person name="Kreitler T."/>
            <person name="Lee Y.-A."/>
            <person name="Monti J."/>
            <person name="Schulz H."/>
            <person name="Zimdahl H."/>
            <person name="Himmelbauer H."/>
            <person name="Lehrach H."/>
            <person name="Jacob H.J."/>
            <person name="Bromberg S."/>
            <person name="Gullings-Handley J."/>
            <person name="Jensen-Seaman M.I."/>
            <person name="Kwitek A.E."/>
            <person name="Lazar J."/>
            <person name="Pasko D."/>
            <person name="Tonellato P.J."/>
            <person name="Twigger S."/>
            <person name="Ponting C.P."/>
            <person name="Duarte J.M."/>
            <person name="Rice S."/>
            <person name="Goodstadt L."/>
            <person name="Beatson S.A."/>
            <person name="Emes R.D."/>
            <person name="Winter E.E."/>
            <person name="Webber C."/>
            <person name="Brandt P."/>
            <person name="Nyakatura G."/>
            <person name="Adetobi M."/>
            <person name="Chiaromonte F."/>
            <person name="Elnitski L."/>
            <person name="Eswara P."/>
            <person name="Hardison R.C."/>
            <person name="Hou M."/>
            <person name="Kolbe D."/>
            <person name="Makova K."/>
            <person name="Miller W."/>
            <person name="Nekrutenko A."/>
            <person name="Riemer C."/>
            <person name="Schwartz S."/>
            <person name="Taylor J."/>
            <person name="Yang S."/>
            <person name="Zhang Y."/>
            <person name="Lindpaintner K."/>
            <person name="Andrews T.D."/>
            <person name="Caccamo M."/>
            <person name="Clamp M."/>
            <person name="Clarke L."/>
            <person name="Curwen V."/>
            <person name="Durbin R.M."/>
            <person name="Eyras E."/>
            <person name="Searle S.M."/>
            <person name="Cooper G.M."/>
            <person name="Batzoglou S."/>
            <person name="Brudno M."/>
            <person name="Sidow A."/>
            <person name="Stone E.A."/>
            <person name="Payseur B.A."/>
            <person name="Bourque G."/>
            <person name="Lopez-Otin C."/>
            <person name="Puente X.S."/>
            <person name="Chakrabarti K."/>
            <person name="Chatterji S."/>
            <person name="Dewey C."/>
            <person name="Pachter L."/>
            <person name="Bray N."/>
            <person name="Yap V.B."/>
            <person name="Caspi A."/>
            <person name="Tesler G."/>
            <person name="Pevzner P.A."/>
            <person name="Haussler D."/>
            <person name="Roskin K.M."/>
            <person name="Baertsch R."/>
            <person name="Clawson H."/>
            <person name="Furey T.S."/>
            <person name="Hinrichs A.S."/>
            <person name="Karolchik D."/>
            <person name="Kent W.J."/>
            <person name="Rosenbloom K.R."/>
            <person name="Trumbower H."/>
            <person name="Weirauch M."/>
            <person name="Cooper D.N."/>
            <person name="Stenson P.D."/>
            <person name="Ma B."/>
            <person name="Brent M."/>
            <person name="Arumugam M."/>
            <person name="Shteynberg D."/>
            <person name="Copley R.R."/>
            <person name="Taylor M.S."/>
            <person name="Riethman H."/>
            <person name="Mudunuri U."/>
            <person name="Peterson J."/>
            <person name="Guyer M."/>
            <person name="Felsenfeld A."/>
            <person name="Old S."/>
            <person name="Mockrin S."/>
            <person name="Collins F.S."/>
        </authorList>
    </citation>
    <scope>NUCLEOTIDE SEQUENCE [LARGE SCALE GENOMIC DNA]</scope>
    <source>
        <strain>Brown Norway</strain>
    </source>
</reference>
<reference key="2">
    <citation type="submission" date="2005-07" db="EMBL/GenBank/DDBJ databases">
        <authorList>
            <person name="Mural R.J."/>
            <person name="Adams M.D."/>
            <person name="Myers E.W."/>
            <person name="Smith H.O."/>
            <person name="Venter J.C."/>
        </authorList>
    </citation>
    <scope>NUCLEOTIDE SEQUENCE [LARGE SCALE GENOMIC DNA]</scope>
</reference>
<reference key="3">
    <citation type="journal article" date="2012" name="Nat. Commun.">
        <title>Quantitative maps of protein phosphorylation sites across 14 different rat organs and tissues.</title>
        <authorList>
            <person name="Lundby A."/>
            <person name="Secher A."/>
            <person name="Lage K."/>
            <person name="Nordsborg N.B."/>
            <person name="Dmytriyev A."/>
            <person name="Lundby C."/>
            <person name="Olsen J.V."/>
        </authorList>
    </citation>
    <scope>PHOSPHORYLATION [LARGE SCALE ANALYSIS] AT SER-42; THR-117 AND SER-121</scope>
    <scope>IDENTIFICATION BY MASS SPECTROMETRY [LARGE SCALE ANALYSIS]</scope>
</reference>
<reference key="4">
    <citation type="journal article" date="2016" name="Sci. Rep.">
        <title>MPP2 is a postsynaptic MAGUK scaffold protein that links SynCAM1 cell adhesion molecules to core components of the postsynaptic density.</title>
        <authorList>
            <person name="Rademacher N."/>
            <person name="Schmerl B."/>
            <person name="Lardong J.A."/>
            <person name="Wahl M.C."/>
            <person name="Shoichet S.A."/>
        </authorList>
    </citation>
    <scope>FUNCTION</scope>
    <scope>SUBUNIT</scope>
    <scope>INTERACTION WITH CACNG2; DLG4; DLGAP1 AND CADM1</scope>
    <scope>SUBCELLULAR LOCATION</scope>
    <scope>TISSUE SPECIFICITY</scope>
</reference>
<sequence length="552" mass="61565">MPVAATNSESAMQQVLDNLGSLPNATGAAELDLIFLRGIMESPIVRSLAKAHERLEETKLEAVRDNNLELVQEILRDLAELAEQSSTAAELARILQEPHFQSLLETHDSVASKTYETPPPSPGLDPTFSNQPVPPDAVRMVGIRKTAGEHLGVTFRVEGGELVIARILHGGMVAQQGLLHVGDIIKEVNGQPVGSDPRALQELLRSASGSVILKILPSYQEPHLPRQVFVKCHFDYDPARDSLIPCKEAGLRFNAGDLLQIVNQDDANWWQACHVEGGSAGLIPSQLLEEKRKAFVKRDLELTPTSGTLCGSLSGKKKKRMMYLTTKNAEFDRHELLIYEEVARMPPFRRKTLVLIGAQGVGRRSLKNKLILWDPDRYGTTVPYTSRRPKDSEREGQGYSFVSRGEMEADIRAGRYLEHGEYEGNLYGTRIDSIRGVVASGKVCVLDVNPQAVKVLRTAEFVPYVVFIEAPDFETLRAMNRAALESGVSTKQLTEADLRRTVEESSRIQRGYGHYFDLSLVNSNLERTFRELQTAMEKLRTEPQWVPVSWVY</sequence>
<name>MPP2_RAT</name>
<keyword id="KW-0966">Cell projection</keyword>
<keyword id="KW-0963">Cytoplasm</keyword>
<keyword id="KW-0206">Cytoskeleton</keyword>
<keyword id="KW-0472">Membrane</keyword>
<keyword id="KW-0597">Phosphoprotein</keyword>
<keyword id="KW-1185">Reference proteome</keyword>
<keyword id="KW-0728">SH3 domain</keyword>
<keyword id="KW-0770">Synapse</keyword>
<comment type="function">
    <text evidence="1 2 7">Postsynaptic MAGUK scaffold protein that links CADM1 cell adhesion molecules to core components of the postsynaptic density (PubMed:27756895). In CA1 pyramidal neurons, required for synaptic KCNN2-containing channel function and long-term potentiation expression (By similarity). Seems to negatively regulate SRC function in epithelial cells (By similarity).</text>
</comment>
<comment type="subunit">
    <text evidence="1 2 7">Can homomultimerise (PubMed:27756895). Interacts with CACNG2 (PubMed:27756895). Interacts (via the SH3-Guanylate kinase-like sub-module) with DLG4/PSD95 and DLGAP1/GKAP (PubMed:27756895). Interacts (via the PDZ domain) with CADM1 (via C-terminus) (PubMed:27756895). Interacts with KCNN2/SK2 (via N-terminal domain) (By similarity). Interacts with SRC (By similarity).</text>
</comment>
<comment type="subcellular location">
    <subcellularLocation>
        <location evidence="2">Cell projection</location>
        <location evidence="2">Dendrite</location>
    </subcellularLocation>
    <subcellularLocation>
        <location evidence="7">Postsynaptic density</location>
    </subcellularLocation>
    <subcellularLocation>
        <location evidence="1">Cytoplasm</location>
        <location evidence="1">Cytoskeleton</location>
    </subcellularLocation>
    <subcellularLocation>
        <location evidence="1">Membrane</location>
    </subcellularLocation>
    <text evidence="2">Prominently expressed in the postsynaptic densities of dendritic spines, is also detected in dendritic shafts.</text>
</comment>
<comment type="tissue specificity">
    <text evidence="7">Expressed in hippocampal neurons.</text>
</comment>
<comment type="PTM">
    <text evidence="1">Phosphorylated by SRC.</text>
</comment>
<comment type="similarity">
    <text evidence="8">Belongs to the MAGUK family.</text>
</comment>